<name>RL3_LIMF3</name>
<feature type="chain" id="PRO_0000353608" description="Large ribosomal subunit protein uL3">
    <location>
        <begin position="1"/>
        <end position="220"/>
    </location>
</feature>
<feature type="region of interest" description="Disordered" evidence="2">
    <location>
        <begin position="113"/>
        <end position="143"/>
    </location>
</feature>
<gene>
    <name evidence="1" type="primary">rplC</name>
    <name type="ordered locus">LAF_1515</name>
</gene>
<accession>B2GDW9</accession>
<sequence length="220" mass="23864">MTKGILGKKVGMTQVFTDNGELVPVTVIDVTPNVVMQVKTLENDGYSAVQLGFDDKREVLSNKPEQGHAAKANTTPKRFIGEIRDAELGDDIKVGDKVAADIFAEGETVDVTGTTKGHGYQGNIHKDGQRRGPMAHGSRYHRRPGSLGAIINHVFKGKKLPGRMGNNTRTVQHLRIVKVDTENNVLLIKGNVPGANKSFVTIKNSVKANTKKSLSKQSNK</sequence>
<evidence type="ECO:0000255" key="1">
    <source>
        <dbReference type="HAMAP-Rule" id="MF_01325"/>
    </source>
</evidence>
<evidence type="ECO:0000256" key="2">
    <source>
        <dbReference type="SAM" id="MobiDB-lite"/>
    </source>
</evidence>
<evidence type="ECO:0000305" key="3"/>
<organism>
    <name type="scientific">Limosilactobacillus fermentum (strain NBRC 3956 / LMG 18251)</name>
    <name type="common">Lactobacillus fermentum</name>
    <dbReference type="NCBI Taxonomy" id="334390"/>
    <lineage>
        <taxon>Bacteria</taxon>
        <taxon>Bacillati</taxon>
        <taxon>Bacillota</taxon>
        <taxon>Bacilli</taxon>
        <taxon>Lactobacillales</taxon>
        <taxon>Lactobacillaceae</taxon>
        <taxon>Limosilactobacillus</taxon>
    </lineage>
</organism>
<proteinExistence type="inferred from homology"/>
<dbReference type="EMBL" id="AP008937">
    <property type="protein sequence ID" value="BAG27851.1"/>
    <property type="molecule type" value="Genomic_DNA"/>
</dbReference>
<dbReference type="RefSeq" id="WP_003681571.1">
    <property type="nucleotide sequence ID" value="NC_010610.1"/>
</dbReference>
<dbReference type="SMR" id="B2GDW9"/>
<dbReference type="GeneID" id="83716108"/>
<dbReference type="KEGG" id="lfe:LAF_1515"/>
<dbReference type="eggNOG" id="COG0087">
    <property type="taxonomic scope" value="Bacteria"/>
</dbReference>
<dbReference type="HOGENOM" id="CLU_044142_4_1_9"/>
<dbReference type="Proteomes" id="UP000001697">
    <property type="component" value="Chromosome"/>
</dbReference>
<dbReference type="GO" id="GO:0022625">
    <property type="term" value="C:cytosolic large ribosomal subunit"/>
    <property type="evidence" value="ECO:0007669"/>
    <property type="project" value="TreeGrafter"/>
</dbReference>
<dbReference type="GO" id="GO:0019843">
    <property type="term" value="F:rRNA binding"/>
    <property type="evidence" value="ECO:0007669"/>
    <property type="project" value="UniProtKB-UniRule"/>
</dbReference>
<dbReference type="GO" id="GO:0003735">
    <property type="term" value="F:structural constituent of ribosome"/>
    <property type="evidence" value="ECO:0007669"/>
    <property type="project" value="InterPro"/>
</dbReference>
<dbReference type="GO" id="GO:0006412">
    <property type="term" value="P:translation"/>
    <property type="evidence" value="ECO:0007669"/>
    <property type="project" value="UniProtKB-UniRule"/>
</dbReference>
<dbReference type="FunFam" id="2.40.30.10:FF:000004">
    <property type="entry name" value="50S ribosomal protein L3"/>
    <property type="match status" value="1"/>
</dbReference>
<dbReference type="FunFam" id="3.30.160.810:FF:000002">
    <property type="entry name" value="50S ribosomal protein L3"/>
    <property type="match status" value="1"/>
</dbReference>
<dbReference type="Gene3D" id="3.30.160.810">
    <property type="match status" value="1"/>
</dbReference>
<dbReference type="Gene3D" id="2.40.30.10">
    <property type="entry name" value="Translation factors"/>
    <property type="match status" value="1"/>
</dbReference>
<dbReference type="HAMAP" id="MF_01325_B">
    <property type="entry name" value="Ribosomal_uL3_B"/>
    <property type="match status" value="1"/>
</dbReference>
<dbReference type="InterPro" id="IPR000597">
    <property type="entry name" value="Ribosomal_uL3"/>
</dbReference>
<dbReference type="InterPro" id="IPR019927">
    <property type="entry name" value="Ribosomal_uL3_bac/org-type"/>
</dbReference>
<dbReference type="InterPro" id="IPR009000">
    <property type="entry name" value="Transl_B-barrel_sf"/>
</dbReference>
<dbReference type="NCBIfam" id="TIGR03625">
    <property type="entry name" value="L3_bact"/>
    <property type="match status" value="1"/>
</dbReference>
<dbReference type="PANTHER" id="PTHR11229">
    <property type="entry name" value="50S RIBOSOMAL PROTEIN L3"/>
    <property type="match status" value="1"/>
</dbReference>
<dbReference type="PANTHER" id="PTHR11229:SF16">
    <property type="entry name" value="LARGE RIBOSOMAL SUBUNIT PROTEIN UL3C"/>
    <property type="match status" value="1"/>
</dbReference>
<dbReference type="Pfam" id="PF00297">
    <property type="entry name" value="Ribosomal_L3"/>
    <property type="match status" value="1"/>
</dbReference>
<dbReference type="SUPFAM" id="SSF50447">
    <property type="entry name" value="Translation proteins"/>
    <property type="match status" value="1"/>
</dbReference>
<reference key="1">
    <citation type="journal article" date="2008" name="DNA Res.">
        <title>Comparative genome analysis of Lactobacillus reuteri and Lactobacillus fermentum reveal a genomic island for reuterin and cobalamin production.</title>
        <authorList>
            <person name="Morita H."/>
            <person name="Toh H."/>
            <person name="Fukuda S."/>
            <person name="Horikawa H."/>
            <person name="Oshima K."/>
            <person name="Suzuki T."/>
            <person name="Murakami M."/>
            <person name="Hisamatsu S."/>
            <person name="Kato Y."/>
            <person name="Takizawa T."/>
            <person name="Fukuoka H."/>
            <person name="Yoshimura T."/>
            <person name="Itoh K."/>
            <person name="O'Sullivan D.J."/>
            <person name="McKay L.L."/>
            <person name="Ohno H."/>
            <person name="Kikuchi J."/>
            <person name="Masaoka T."/>
            <person name="Hattori M."/>
        </authorList>
    </citation>
    <scope>NUCLEOTIDE SEQUENCE [LARGE SCALE GENOMIC DNA]</scope>
    <source>
        <strain>NBRC 3956 / LMG 18251</strain>
    </source>
</reference>
<comment type="function">
    <text evidence="1">One of the primary rRNA binding proteins, it binds directly near the 3'-end of the 23S rRNA, where it nucleates assembly of the 50S subunit.</text>
</comment>
<comment type="subunit">
    <text evidence="1">Part of the 50S ribosomal subunit. Forms a cluster with proteins L14 and L19.</text>
</comment>
<comment type="similarity">
    <text evidence="1">Belongs to the universal ribosomal protein uL3 family.</text>
</comment>
<keyword id="KW-1185">Reference proteome</keyword>
<keyword id="KW-0687">Ribonucleoprotein</keyword>
<keyword id="KW-0689">Ribosomal protein</keyword>
<keyword id="KW-0694">RNA-binding</keyword>
<keyword id="KW-0699">rRNA-binding</keyword>
<protein>
    <recommendedName>
        <fullName evidence="1">Large ribosomal subunit protein uL3</fullName>
    </recommendedName>
    <alternativeName>
        <fullName evidence="3">50S ribosomal protein L3</fullName>
    </alternativeName>
</protein>